<dbReference type="EC" id="2.5.1.39" evidence="1"/>
<dbReference type="EMBL" id="CP000016">
    <property type="protein sequence ID" value="AAZ40674.1"/>
    <property type="molecule type" value="Genomic_DNA"/>
</dbReference>
<dbReference type="RefSeq" id="WP_011282580.1">
    <property type="nucleotide sequence ID" value="NC_007292.1"/>
</dbReference>
<dbReference type="SMR" id="Q494A7"/>
<dbReference type="STRING" id="291272.BPEN_025"/>
<dbReference type="KEGG" id="bpn:BPEN_025"/>
<dbReference type="eggNOG" id="COG0382">
    <property type="taxonomic scope" value="Bacteria"/>
</dbReference>
<dbReference type="HOGENOM" id="CLU_034879_1_0_6"/>
<dbReference type="OrthoDB" id="9782418at2"/>
<dbReference type="UniPathway" id="UPA00232"/>
<dbReference type="Proteomes" id="UP000007794">
    <property type="component" value="Chromosome"/>
</dbReference>
<dbReference type="GO" id="GO:0005886">
    <property type="term" value="C:plasma membrane"/>
    <property type="evidence" value="ECO:0007669"/>
    <property type="project" value="UniProtKB-SubCell"/>
</dbReference>
<dbReference type="GO" id="GO:0008412">
    <property type="term" value="F:4-hydroxybenzoate polyprenyltransferase activity"/>
    <property type="evidence" value="ECO:0007669"/>
    <property type="project" value="UniProtKB-UniRule"/>
</dbReference>
<dbReference type="GO" id="GO:0006744">
    <property type="term" value="P:ubiquinone biosynthetic process"/>
    <property type="evidence" value="ECO:0007669"/>
    <property type="project" value="UniProtKB-UniRule"/>
</dbReference>
<dbReference type="CDD" id="cd13959">
    <property type="entry name" value="PT_UbiA_COQ2"/>
    <property type="match status" value="1"/>
</dbReference>
<dbReference type="FunFam" id="1.10.357.140:FF:000002">
    <property type="entry name" value="4-hydroxybenzoate octaprenyltransferase"/>
    <property type="match status" value="1"/>
</dbReference>
<dbReference type="FunFam" id="1.20.120.1780:FF:000001">
    <property type="entry name" value="4-hydroxybenzoate octaprenyltransferase"/>
    <property type="match status" value="1"/>
</dbReference>
<dbReference type="Gene3D" id="1.10.357.140">
    <property type="entry name" value="UbiA prenyltransferase"/>
    <property type="match status" value="1"/>
</dbReference>
<dbReference type="Gene3D" id="1.20.120.1780">
    <property type="entry name" value="UbiA prenyltransferase"/>
    <property type="match status" value="1"/>
</dbReference>
<dbReference type="HAMAP" id="MF_01635">
    <property type="entry name" value="UbiA"/>
    <property type="match status" value="1"/>
</dbReference>
<dbReference type="InterPro" id="IPR006370">
    <property type="entry name" value="HB_polyprenyltransferase-like"/>
</dbReference>
<dbReference type="InterPro" id="IPR039653">
    <property type="entry name" value="Prenyltransferase"/>
</dbReference>
<dbReference type="InterPro" id="IPR000537">
    <property type="entry name" value="UbiA_prenyltransferase"/>
</dbReference>
<dbReference type="InterPro" id="IPR030470">
    <property type="entry name" value="UbiA_prenylTrfase_CS"/>
</dbReference>
<dbReference type="InterPro" id="IPR044878">
    <property type="entry name" value="UbiA_sf"/>
</dbReference>
<dbReference type="NCBIfam" id="TIGR01474">
    <property type="entry name" value="ubiA_proteo"/>
    <property type="match status" value="1"/>
</dbReference>
<dbReference type="PANTHER" id="PTHR11048:SF28">
    <property type="entry name" value="4-HYDROXYBENZOATE POLYPRENYLTRANSFERASE, MITOCHONDRIAL"/>
    <property type="match status" value="1"/>
</dbReference>
<dbReference type="PANTHER" id="PTHR11048">
    <property type="entry name" value="PRENYLTRANSFERASES"/>
    <property type="match status" value="1"/>
</dbReference>
<dbReference type="Pfam" id="PF01040">
    <property type="entry name" value="UbiA"/>
    <property type="match status" value="1"/>
</dbReference>
<dbReference type="PROSITE" id="PS00943">
    <property type="entry name" value="UBIA"/>
    <property type="match status" value="1"/>
</dbReference>
<proteinExistence type="inferred from homology"/>
<accession>Q494A7</accession>
<keyword id="KW-0997">Cell inner membrane</keyword>
<keyword id="KW-1003">Cell membrane</keyword>
<keyword id="KW-0460">Magnesium</keyword>
<keyword id="KW-0472">Membrane</keyword>
<keyword id="KW-1185">Reference proteome</keyword>
<keyword id="KW-0808">Transferase</keyword>
<keyword id="KW-0812">Transmembrane</keyword>
<keyword id="KW-1133">Transmembrane helix</keyword>
<keyword id="KW-0831">Ubiquinone biosynthesis</keyword>
<reference key="1">
    <citation type="journal article" date="2005" name="Genome Res.">
        <title>Genome sequence of Blochmannia pennsylvanicus indicates parallel evolutionary trends among bacterial mutualists of insects.</title>
        <authorList>
            <person name="Degnan P.H."/>
            <person name="Lazarus A.B."/>
            <person name="Wernegreen J.J."/>
        </authorList>
    </citation>
    <scope>NUCLEOTIDE SEQUENCE [LARGE SCALE GENOMIC DNA]</scope>
    <source>
        <strain>BPEN</strain>
    </source>
</reference>
<sequence>MSNRLFFIKKCYNLAQLMRINQPIGFFLLLWPTLWGLWLSHKGIPDKVVLIVFVAGALCMRSAGCIINDYVDYDIDGHVQRTKTRPLPSGMIRKKEALVALSILLFIAFILVLSLNFITIFLSVVALILSWIYPYLKRYIYFPQVMLGLLFSWPILMAFTAINNPINSTAWLLFLMNTVWTIVYDTQYAMIDREDDIYVGIKSSAVLFGDMDKFLIGILQLCIVFILGIIGWKERFTVVFYFFSLFGVIILFMWQQILINKRKRIRYFQAFLSNNYVGMLVFIGIASSFH</sequence>
<protein>
    <recommendedName>
        <fullName evidence="1">4-hydroxybenzoate octaprenyltransferase</fullName>
        <ecNumber evidence="1">2.5.1.39</ecNumber>
    </recommendedName>
    <alternativeName>
        <fullName evidence="1">4-HB polyprenyltransferase</fullName>
    </alternativeName>
</protein>
<feature type="chain" id="PRO_0000262780" description="4-hydroxybenzoate octaprenyltransferase">
    <location>
        <begin position="1"/>
        <end position="290"/>
    </location>
</feature>
<feature type="transmembrane region" description="Helical" evidence="1">
    <location>
        <begin position="24"/>
        <end position="44"/>
    </location>
</feature>
<feature type="transmembrane region" description="Helical" evidence="1">
    <location>
        <begin position="48"/>
        <end position="68"/>
    </location>
</feature>
<feature type="transmembrane region" description="Helical" evidence="1">
    <location>
        <begin position="98"/>
        <end position="118"/>
    </location>
</feature>
<feature type="transmembrane region" description="Helical" evidence="1">
    <location>
        <begin position="142"/>
        <end position="162"/>
    </location>
</feature>
<feature type="transmembrane region" description="Helical" evidence="1">
    <location>
        <begin position="171"/>
        <end position="191"/>
    </location>
</feature>
<feature type="transmembrane region" description="Helical" evidence="1">
    <location>
        <begin position="214"/>
        <end position="234"/>
    </location>
</feature>
<feature type="transmembrane region" description="Helical" evidence="1">
    <location>
        <begin position="239"/>
        <end position="259"/>
    </location>
</feature>
<feature type="transmembrane region" description="Helical" evidence="1">
    <location>
        <begin position="270"/>
        <end position="290"/>
    </location>
</feature>
<organism>
    <name type="scientific">Blochmanniella pennsylvanica (strain BPEN)</name>
    <dbReference type="NCBI Taxonomy" id="291272"/>
    <lineage>
        <taxon>Bacteria</taxon>
        <taxon>Pseudomonadati</taxon>
        <taxon>Pseudomonadota</taxon>
        <taxon>Gammaproteobacteria</taxon>
        <taxon>Enterobacterales</taxon>
        <taxon>Enterobacteriaceae</taxon>
        <taxon>ant endosymbionts</taxon>
        <taxon>Candidatus Blochmanniella</taxon>
    </lineage>
</organism>
<evidence type="ECO:0000255" key="1">
    <source>
        <dbReference type="HAMAP-Rule" id="MF_01635"/>
    </source>
</evidence>
<name>UBIA_BLOPB</name>
<comment type="function">
    <text evidence="1">Catalyzes the prenylation of para-hydroxybenzoate (PHB) with an all-trans polyprenyl group. Mediates the second step in the final reaction sequence of ubiquinone-8 (UQ-8) biosynthesis, which is the condensation of the polyisoprenoid side chain with PHB, generating the first membrane-bound Q intermediate 3-octaprenyl-4-hydroxybenzoate.</text>
</comment>
<comment type="catalytic activity">
    <reaction evidence="1">
        <text>all-trans-octaprenyl diphosphate + 4-hydroxybenzoate = 4-hydroxy-3-(all-trans-octaprenyl)benzoate + diphosphate</text>
        <dbReference type="Rhea" id="RHEA:27782"/>
        <dbReference type="ChEBI" id="CHEBI:1617"/>
        <dbReference type="ChEBI" id="CHEBI:17879"/>
        <dbReference type="ChEBI" id="CHEBI:33019"/>
        <dbReference type="ChEBI" id="CHEBI:57711"/>
        <dbReference type="EC" id="2.5.1.39"/>
    </reaction>
</comment>
<comment type="cofactor">
    <cofactor evidence="1">
        <name>Mg(2+)</name>
        <dbReference type="ChEBI" id="CHEBI:18420"/>
    </cofactor>
</comment>
<comment type="pathway">
    <text evidence="1">Cofactor biosynthesis; ubiquinone biosynthesis.</text>
</comment>
<comment type="subcellular location">
    <subcellularLocation>
        <location evidence="1">Cell inner membrane</location>
        <topology evidence="1">Multi-pass membrane protein</topology>
    </subcellularLocation>
</comment>
<comment type="similarity">
    <text evidence="1">Belongs to the UbiA prenyltransferase family.</text>
</comment>
<gene>
    <name evidence="1" type="primary">ubiA</name>
    <name type="ordered locus">BPEN_025</name>
</gene>